<comment type="function">
    <text>Involved in oxygen transport from the lung to the various peripheral tissues.</text>
</comment>
<comment type="subunit">
    <text>Heterotetramer of two alpha chains and two beta chains.</text>
</comment>
<comment type="tissue specificity">
    <text>Red blood cells.</text>
</comment>
<comment type="similarity">
    <text evidence="1">Belongs to the globin family.</text>
</comment>
<sequence>STSTSTSDYSAADRAELAALSKVLAQNAEAFGAEALARMFTVYAATKSYFKDYKDFTAAAPSIKAHGAKVVTALAKACDHLDDLKTHLHKLATFHGSELKVDPANFQYLSYCLEVALAVHLTEFSPETHCALDKFLTNVCHELSSRYR</sequence>
<feature type="chain" id="PRO_0000052649" description="Hemoglobin subunit alpha">
    <location>
        <begin position="1"/>
        <end position="148"/>
    </location>
</feature>
<feature type="domain" description="Globin" evidence="1">
    <location>
        <begin position="8"/>
        <end position="148"/>
    </location>
</feature>
<feature type="binding site" evidence="1">
    <location>
        <position position="66"/>
    </location>
    <ligand>
        <name>O2</name>
        <dbReference type="ChEBI" id="CHEBI:15379"/>
    </ligand>
</feature>
<feature type="binding site" description="proximal binding residue" evidence="1">
    <location>
        <position position="95"/>
    </location>
    <ligand>
        <name>heme b</name>
        <dbReference type="ChEBI" id="CHEBI:60344"/>
    </ligand>
    <ligandPart>
        <name>Fe</name>
        <dbReference type="ChEBI" id="CHEBI:18248"/>
    </ligandPart>
</feature>
<feature type="modified residue" description="N-acetylserine" evidence="2">
    <location>
        <position position="1"/>
    </location>
</feature>
<gene>
    <name type="primary">HBA</name>
</gene>
<proteinExistence type="evidence at protein level"/>
<protein>
    <recommendedName>
        <fullName>Hemoglobin subunit alpha</fullName>
    </recommendedName>
    <alternativeName>
        <fullName>Alpha-globin</fullName>
    </alternativeName>
    <alternativeName>
        <fullName>Hemoglobin alpha chain</fullName>
    </alternativeName>
</protein>
<dbReference type="PIR" id="A02350">
    <property type="entry name" value="HARKJ"/>
</dbReference>
<dbReference type="SMR" id="P02021"/>
<dbReference type="iPTMnet" id="P02021"/>
<dbReference type="GO" id="GO:0072562">
    <property type="term" value="C:blood microparticle"/>
    <property type="evidence" value="ECO:0007669"/>
    <property type="project" value="TreeGrafter"/>
</dbReference>
<dbReference type="GO" id="GO:0031838">
    <property type="term" value="C:haptoglobin-hemoglobin complex"/>
    <property type="evidence" value="ECO:0007669"/>
    <property type="project" value="TreeGrafter"/>
</dbReference>
<dbReference type="GO" id="GO:0005833">
    <property type="term" value="C:hemoglobin complex"/>
    <property type="evidence" value="ECO:0007669"/>
    <property type="project" value="InterPro"/>
</dbReference>
<dbReference type="GO" id="GO:0031720">
    <property type="term" value="F:haptoglobin binding"/>
    <property type="evidence" value="ECO:0007669"/>
    <property type="project" value="TreeGrafter"/>
</dbReference>
<dbReference type="GO" id="GO:0020037">
    <property type="term" value="F:heme binding"/>
    <property type="evidence" value="ECO:0007669"/>
    <property type="project" value="InterPro"/>
</dbReference>
<dbReference type="GO" id="GO:0046872">
    <property type="term" value="F:metal ion binding"/>
    <property type="evidence" value="ECO:0007669"/>
    <property type="project" value="UniProtKB-KW"/>
</dbReference>
<dbReference type="GO" id="GO:0043177">
    <property type="term" value="F:organic acid binding"/>
    <property type="evidence" value="ECO:0007669"/>
    <property type="project" value="TreeGrafter"/>
</dbReference>
<dbReference type="GO" id="GO:0019825">
    <property type="term" value="F:oxygen binding"/>
    <property type="evidence" value="ECO:0007669"/>
    <property type="project" value="InterPro"/>
</dbReference>
<dbReference type="GO" id="GO:0005344">
    <property type="term" value="F:oxygen carrier activity"/>
    <property type="evidence" value="ECO:0007669"/>
    <property type="project" value="UniProtKB-KW"/>
</dbReference>
<dbReference type="GO" id="GO:0004601">
    <property type="term" value="F:peroxidase activity"/>
    <property type="evidence" value="ECO:0007669"/>
    <property type="project" value="TreeGrafter"/>
</dbReference>
<dbReference type="GO" id="GO:0042744">
    <property type="term" value="P:hydrogen peroxide catabolic process"/>
    <property type="evidence" value="ECO:0007669"/>
    <property type="project" value="TreeGrafter"/>
</dbReference>
<dbReference type="CDD" id="cd08927">
    <property type="entry name" value="Hb-alpha-like"/>
    <property type="match status" value="1"/>
</dbReference>
<dbReference type="Gene3D" id="1.10.490.10">
    <property type="entry name" value="Globins"/>
    <property type="match status" value="1"/>
</dbReference>
<dbReference type="InterPro" id="IPR000971">
    <property type="entry name" value="Globin"/>
</dbReference>
<dbReference type="InterPro" id="IPR009050">
    <property type="entry name" value="Globin-like_sf"/>
</dbReference>
<dbReference type="InterPro" id="IPR012292">
    <property type="entry name" value="Globin/Proto"/>
</dbReference>
<dbReference type="InterPro" id="IPR002338">
    <property type="entry name" value="Hemoglobin_a-typ"/>
</dbReference>
<dbReference type="InterPro" id="IPR050056">
    <property type="entry name" value="Hemoglobin_oxygen_transport"/>
</dbReference>
<dbReference type="PANTHER" id="PTHR11442">
    <property type="entry name" value="HEMOGLOBIN FAMILY MEMBER"/>
    <property type="match status" value="1"/>
</dbReference>
<dbReference type="Pfam" id="PF00042">
    <property type="entry name" value="Globin"/>
    <property type="match status" value="1"/>
</dbReference>
<dbReference type="PRINTS" id="PR00612">
    <property type="entry name" value="ALPHAHAEM"/>
</dbReference>
<dbReference type="SUPFAM" id="SSF46458">
    <property type="entry name" value="Globin-like"/>
    <property type="match status" value="1"/>
</dbReference>
<dbReference type="PROSITE" id="PS01033">
    <property type="entry name" value="GLOBIN"/>
    <property type="match status" value="1"/>
</dbReference>
<name>HBA_HETPO</name>
<reference key="1">
    <citation type="journal article" date="1976" name="Aust. J. Biol. Sci.">
        <title>Haemoglobins of the shark, Heterodontus portusjacksoni II. Amino acid sequence of the alpha-chain.</title>
        <authorList>
            <person name="Nash A.R."/>
            <person name="Fisher W.K."/>
            <person name="Thompson E.O.P."/>
        </authorList>
    </citation>
    <scope>PROTEIN SEQUENCE</scope>
    <scope>ACETYLATION AT SER-1</scope>
</reference>
<evidence type="ECO:0000255" key="1">
    <source>
        <dbReference type="PROSITE-ProRule" id="PRU00238"/>
    </source>
</evidence>
<evidence type="ECO:0000269" key="2">
    <source>
    </source>
</evidence>
<organism>
    <name type="scientific">Heterodontus portusjacksoni</name>
    <name type="common">Port Jackson shark</name>
    <dbReference type="NCBI Taxonomy" id="7793"/>
    <lineage>
        <taxon>Eukaryota</taxon>
        <taxon>Metazoa</taxon>
        <taxon>Chordata</taxon>
        <taxon>Craniata</taxon>
        <taxon>Vertebrata</taxon>
        <taxon>Chondrichthyes</taxon>
        <taxon>Elasmobranchii</taxon>
        <taxon>Galeomorphii</taxon>
        <taxon>Heterodontoidea</taxon>
        <taxon>Heterodontiformes</taxon>
        <taxon>Heterodontidae</taxon>
        <taxon>Heterodontus</taxon>
    </lineage>
</organism>
<accession>P02021</accession>
<keyword id="KW-0007">Acetylation</keyword>
<keyword id="KW-0903">Direct protein sequencing</keyword>
<keyword id="KW-0349">Heme</keyword>
<keyword id="KW-0408">Iron</keyword>
<keyword id="KW-0479">Metal-binding</keyword>
<keyword id="KW-0561">Oxygen transport</keyword>
<keyword id="KW-0813">Transport</keyword>